<sequence>MRLILLGAPGAGKGTQAAFICQKFGIPQISTGDMLRAAVKAGTPLGLQAKAVMDAGQLVSDDLIINLVKERIAEPDCAQGFLFDGFPRTIPQADAMKAAGVKLDYVLEIDVPFDAIIERMSGRRSHPASGRTYHVKFNPPKVEGKDDVTGEPLVQREDDKEETVKKRLQVYSDQTRPLVDYYSSWAKTDPANAPKYRAIQGTGSVEEITQRALTALSS</sequence>
<keyword id="KW-0067">ATP-binding</keyword>
<keyword id="KW-0963">Cytoplasm</keyword>
<keyword id="KW-0418">Kinase</keyword>
<keyword id="KW-0545">Nucleotide biosynthesis</keyword>
<keyword id="KW-0547">Nucleotide-binding</keyword>
<keyword id="KW-1185">Reference proteome</keyword>
<keyword id="KW-0808">Transferase</keyword>
<dbReference type="EC" id="2.7.4.3" evidence="1"/>
<dbReference type="EMBL" id="CP001392">
    <property type="protein sequence ID" value="ACM33012.1"/>
    <property type="molecule type" value="Genomic_DNA"/>
</dbReference>
<dbReference type="RefSeq" id="WP_011805515.1">
    <property type="nucleotide sequence ID" value="NC_011992.1"/>
</dbReference>
<dbReference type="SMR" id="B9MI80"/>
<dbReference type="GeneID" id="84681751"/>
<dbReference type="KEGG" id="dia:Dtpsy_1551"/>
<dbReference type="eggNOG" id="COG0563">
    <property type="taxonomic scope" value="Bacteria"/>
</dbReference>
<dbReference type="HOGENOM" id="CLU_032354_1_2_4"/>
<dbReference type="UniPathway" id="UPA00588">
    <property type="reaction ID" value="UER00649"/>
</dbReference>
<dbReference type="Proteomes" id="UP000000450">
    <property type="component" value="Chromosome"/>
</dbReference>
<dbReference type="GO" id="GO:0005737">
    <property type="term" value="C:cytoplasm"/>
    <property type="evidence" value="ECO:0007669"/>
    <property type="project" value="UniProtKB-SubCell"/>
</dbReference>
<dbReference type="GO" id="GO:0004017">
    <property type="term" value="F:adenylate kinase activity"/>
    <property type="evidence" value="ECO:0007669"/>
    <property type="project" value="UniProtKB-UniRule"/>
</dbReference>
<dbReference type="GO" id="GO:0005524">
    <property type="term" value="F:ATP binding"/>
    <property type="evidence" value="ECO:0007669"/>
    <property type="project" value="UniProtKB-UniRule"/>
</dbReference>
<dbReference type="GO" id="GO:0044209">
    <property type="term" value="P:AMP salvage"/>
    <property type="evidence" value="ECO:0007669"/>
    <property type="project" value="UniProtKB-UniRule"/>
</dbReference>
<dbReference type="CDD" id="cd01428">
    <property type="entry name" value="ADK"/>
    <property type="match status" value="1"/>
</dbReference>
<dbReference type="FunFam" id="3.40.50.300:FF:000106">
    <property type="entry name" value="Adenylate kinase mitochondrial"/>
    <property type="match status" value="1"/>
</dbReference>
<dbReference type="Gene3D" id="3.40.50.300">
    <property type="entry name" value="P-loop containing nucleotide triphosphate hydrolases"/>
    <property type="match status" value="1"/>
</dbReference>
<dbReference type="HAMAP" id="MF_00235">
    <property type="entry name" value="Adenylate_kinase_Adk"/>
    <property type="match status" value="1"/>
</dbReference>
<dbReference type="InterPro" id="IPR006259">
    <property type="entry name" value="Adenyl_kin_sub"/>
</dbReference>
<dbReference type="InterPro" id="IPR000850">
    <property type="entry name" value="Adenylat/UMP-CMP_kin"/>
</dbReference>
<dbReference type="InterPro" id="IPR033690">
    <property type="entry name" value="Adenylat_kinase_CS"/>
</dbReference>
<dbReference type="InterPro" id="IPR007862">
    <property type="entry name" value="Adenylate_kinase_lid-dom"/>
</dbReference>
<dbReference type="InterPro" id="IPR027417">
    <property type="entry name" value="P-loop_NTPase"/>
</dbReference>
<dbReference type="NCBIfam" id="TIGR01351">
    <property type="entry name" value="adk"/>
    <property type="match status" value="1"/>
</dbReference>
<dbReference type="NCBIfam" id="NF001379">
    <property type="entry name" value="PRK00279.1-1"/>
    <property type="match status" value="1"/>
</dbReference>
<dbReference type="NCBIfam" id="NF001380">
    <property type="entry name" value="PRK00279.1-2"/>
    <property type="match status" value="1"/>
</dbReference>
<dbReference type="NCBIfam" id="NF001381">
    <property type="entry name" value="PRK00279.1-3"/>
    <property type="match status" value="1"/>
</dbReference>
<dbReference type="NCBIfam" id="NF011100">
    <property type="entry name" value="PRK14527.1"/>
    <property type="match status" value="1"/>
</dbReference>
<dbReference type="PANTHER" id="PTHR23359">
    <property type="entry name" value="NUCLEOTIDE KINASE"/>
    <property type="match status" value="1"/>
</dbReference>
<dbReference type="Pfam" id="PF00406">
    <property type="entry name" value="ADK"/>
    <property type="match status" value="1"/>
</dbReference>
<dbReference type="Pfam" id="PF05191">
    <property type="entry name" value="ADK_lid"/>
    <property type="match status" value="1"/>
</dbReference>
<dbReference type="PRINTS" id="PR00094">
    <property type="entry name" value="ADENYLTKNASE"/>
</dbReference>
<dbReference type="SUPFAM" id="SSF52540">
    <property type="entry name" value="P-loop containing nucleoside triphosphate hydrolases"/>
    <property type="match status" value="1"/>
</dbReference>
<dbReference type="PROSITE" id="PS00113">
    <property type="entry name" value="ADENYLATE_KINASE"/>
    <property type="match status" value="1"/>
</dbReference>
<organism>
    <name type="scientific">Acidovorax ebreus (strain TPSY)</name>
    <name type="common">Diaphorobacter sp. (strain TPSY)</name>
    <dbReference type="NCBI Taxonomy" id="535289"/>
    <lineage>
        <taxon>Bacteria</taxon>
        <taxon>Pseudomonadati</taxon>
        <taxon>Pseudomonadota</taxon>
        <taxon>Betaproteobacteria</taxon>
        <taxon>Burkholderiales</taxon>
        <taxon>Comamonadaceae</taxon>
        <taxon>Diaphorobacter</taxon>
    </lineage>
</organism>
<reference key="1">
    <citation type="submission" date="2009-01" db="EMBL/GenBank/DDBJ databases">
        <title>Complete sequence of Diaphorobacter sp. TPSY.</title>
        <authorList>
            <consortium name="US DOE Joint Genome Institute"/>
            <person name="Lucas S."/>
            <person name="Copeland A."/>
            <person name="Lapidus A."/>
            <person name="Glavina del Rio T."/>
            <person name="Tice H."/>
            <person name="Bruce D."/>
            <person name="Goodwin L."/>
            <person name="Pitluck S."/>
            <person name="Chertkov O."/>
            <person name="Brettin T."/>
            <person name="Detter J.C."/>
            <person name="Han C."/>
            <person name="Larimer F."/>
            <person name="Land M."/>
            <person name="Hauser L."/>
            <person name="Kyrpides N."/>
            <person name="Mikhailova N."/>
            <person name="Coates J.D."/>
        </authorList>
    </citation>
    <scope>NUCLEOTIDE SEQUENCE [LARGE SCALE GENOMIC DNA]</scope>
    <source>
        <strain>TPSY</strain>
    </source>
</reference>
<accession>B9MI80</accession>
<name>KAD_ACIET</name>
<proteinExistence type="inferred from homology"/>
<gene>
    <name evidence="1" type="primary">adk</name>
    <name type="ordered locus">Dtpsy_1551</name>
</gene>
<feature type="chain" id="PRO_1000191140" description="Adenylate kinase">
    <location>
        <begin position="1"/>
        <end position="218"/>
    </location>
</feature>
<feature type="region of interest" description="NMP" evidence="1">
    <location>
        <begin position="30"/>
        <end position="59"/>
    </location>
</feature>
<feature type="region of interest" description="LID" evidence="1">
    <location>
        <begin position="122"/>
        <end position="159"/>
    </location>
</feature>
<feature type="region of interest" description="Disordered" evidence="2">
    <location>
        <begin position="127"/>
        <end position="150"/>
    </location>
</feature>
<feature type="binding site" evidence="1">
    <location>
        <begin position="10"/>
        <end position="15"/>
    </location>
    <ligand>
        <name>ATP</name>
        <dbReference type="ChEBI" id="CHEBI:30616"/>
    </ligand>
</feature>
<feature type="binding site" evidence="1">
    <location>
        <position position="31"/>
    </location>
    <ligand>
        <name>AMP</name>
        <dbReference type="ChEBI" id="CHEBI:456215"/>
    </ligand>
</feature>
<feature type="binding site" evidence="1">
    <location>
        <position position="36"/>
    </location>
    <ligand>
        <name>AMP</name>
        <dbReference type="ChEBI" id="CHEBI:456215"/>
    </ligand>
</feature>
<feature type="binding site" evidence="1">
    <location>
        <begin position="57"/>
        <end position="59"/>
    </location>
    <ligand>
        <name>AMP</name>
        <dbReference type="ChEBI" id="CHEBI:456215"/>
    </ligand>
</feature>
<feature type="binding site" evidence="1">
    <location>
        <begin position="85"/>
        <end position="88"/>
    </location>
    <ligand>
        <name>AMP</name>
        <dbReference type="ChEBI" id="CHEBI:456215"/>
    </ligand>
</feature>
<feature type="binding site" evidence="1">
    <location>
        <position position="92"/>
    </location>
    <ligand>
        <name>AMP</name>
        <dbReference type="ChEBI" id="CHEBI:456215"/>
    </ligand>
</feature>
<feature type="binding site" evidence="1">
    <location>
        <position position="123"/>
    </location>
    <ligand>
        <name>ATP</name>
        <dbReference type="ChEBI" id="CHEBI:30616"/>
    </ligand>
</feature>
<feature type="binding site" evidence="1">
    <location>
        <begin position="132"/>
        <end position="133"/>
    </location>
    <ligand>
        <name>ATP</name>
        <dbReference type="ChEBI" id="CHEBI:30616"/>
    </ligand>
</feature>
<feature type="binding site" evidence="1">
    <location>
        <position position="156"/>
    </location>
    <ligand>
        <name>AMP</name>
        <dbReference type="ChEBI" id="CHEBI:456215"/>
    </ligand>
</feature>
<feature type="binding site" evidence="1">
    <location>
        <position position="167"/>
    </location>
    <ligand>
        <name>AMP</name>
        <dbReference type="ChEBI" id="CHEBI:456215"/>
    </ligand>
</feature>
<feature type="binding site" evidence="1">
    <location>
        <position position="203"/>
    </location>
    <ligand>
        <name>ATP</name>
        <dbReference type="ChEBI" id="CHEBI:30616"/>
    </ligand>
</feature>
<comment type="function">
    <text evidence="1">Catalyzes the reversible transfer of the terminal phosphate group between ATP and AMP. Plays an important role in cellular energy homeostasis and in adenine nucleotide metabolism.</text>
</comment>
<comment type="catalytic activity">
    <reaction evidence="1">
        <text>AMP + ATP = 2 ADP</text>
        <dbReference type="Rhea" id="RHEA:12973"/>
        <dbReference type="ChEBI" id="CHEBI:30616"/>
        <dbReference type="ChEBI" id="CHEBI:456215"/>
        <dbReference type="ChEBI" id="CHEBI:456216"/>
        <dbReference type="EC" id="2.7.4.3"/>
    </reaction>
</comment>
<comment type="pathway">
    <text evidence="1">Purine metabolism; AMP biosynthesis via salvage pathway; AMP from ADP: step 1/1.</text>
</comment>
<comment type="subunit">
    <text evidence="1">Monomer.</text>
</comment>
<comment type="subcellular location">
    <subcellularLocation>
        <location evidence="1">Cytoplasm</location>
    </subcellularLocation>
</comment>
<comment type="domain">
    <text evidence="1">Consists of three domains, a large central CORE domain and two small peripheral domains, NMPbind and LID, which undergo movements during catalysis. The LID domain closes over the site of phosphoryl transfer upon ATP binding. Assembling and dissambling the active center during each catalytic cycle provides an effective means to prevent ATP hydrolysis.</text>
</comment>
<comment type="similarity">
    <text evidence="1">Belongs to the adenylate kinase family.</text>
</comment>
<protein>
    <recommendedName>
        <fullName evidence="1">Adenylate kinase</fullName>
        <shortName evidence="1">AK</shortName>
        <ecNumber evidence="1">2.7.4.3</ecNumber>
    </recommendedName>
    <alternativeName>
        <fullName evidence="1">ATP-AMP transphosphorylase</fullName>
    </alternativeName>
    <alternativeName>
        <fullName evidence="1">ATP:AMP phosphotransferase</fullName>
    </alternativeName>
    <alternativeName>
        <fullName evidence="1">Adenylate monophosphate kinase</fullName>
    </alternativeName>
</protein>
<evidence type="ECO:0000255" key="1">
    <source>
        <dbReference type="HAMAP-Rule" id="MF_00235"/>
    </source>
</evidence>
<evidence type="ECO:0000256" key="2">
    <source>
        <dbReference type="SAM" id="MobiDB-lite"/>
    </source>
</evidence>